<proteinExistence type="evidence at protein level"/>
<evidence type="ECO:0000269" key="1">
    <source>
    </source>
</evidence>
<evidence type="ECO:0000303" key="2">
    <source>
    </source>
</evidence>
<evidence type="ECO:0000305" key="3">
    <source>
    </source>
</evidence>
<reference key="1">
    <citation type="journal article" date="2007" name="J. Pept. Sci.">
        <title>Identification of three novel peptides isolated from the venom of the neotropical social wasp Polistes major major.</title>
        <authorList>
            <person name="Cerovsky V."/>
            <person name="Pohl J."/>
            <person name="Yang Z."/>
            <person name="Alam N."/>
            <person name="Attygalle A.B."/>
        </authorList>
    </citation>
    <scope>PROTEIN SEQUENCE</scope>
    <scope>SUBCELLULAR LOCATION</scope>
    <scope>MASS SPECTROMETRY</scope>
    <scope>AMIDATION AT LEU-12</scope>
    <source>
        <strain>Subsp. major</strain>
        <tissue>Venom</tissue>
    </source>
</reference>
<feature type="peptide" id="PRO_0000371798" description="Venom peptide PPM3" evidence="1">
    <location>
        <begin position="1"/>
        <end position="12"/>
    </location>
</feature>
<feature type="modified residue" description="Leucine amide" evidence="1">
    <location>
        <position position="12"/>
    </location>
</feature>
<name>VP3_POLMJ</name>
<sequence length="12" mass="1320">FLSALLGMLKNL</sequence>
<protein>
    <recommendedName>
        <fullName evidence="2">Venom peptide PPM3</fullName>
    </recommendedName>
</protein>
<organism>
    <name type="scientific">Polistes major</name>
    <name type="common">Horse paper wasp</name>
    <dbReference type="NCBI Taxonomy" id="91420"/>
    <lineage>
        <taxon>Eukaryota</taxon>
        <taxon>Metazoa</taxon>
        <taxon>Ecdysozoa</taxon>
        <taxon>Arthropoda</taxon>
        <taxon>Hexapoda</taxon>
        <taxon>Insecta</taxon>
        <taxon>Pterygota</taxon>
        <taxon>Neoptera</taxon>
        <taxon>Endopterygota</taxon>
        <taxon>Hymenoptera</taxon>
        <taxon>Apocrita</taxon>
        <taxon>Aculeata</taxon>
        <taxon>Vespoidea</taxon>
        <taxon>Vespidae</taxon>
        <taxon>Polistinae</taxon>
        <taxon>Polistini</taxon>
        <taxon>Polistes</taxon>
    </lineage>
</organism>
<keyword id="KW-0027">Amidation</keyword>
<keyword id="KW-0903">Direct protein sequencing</keyword>
<keyword id="KW-0964">Secreted</keyword>
<accession>P85875</accession>
<comment type="subcellular location">
    <subcellularLocation>
        <location evidence="1">Secreted</location>
    </subcellularLocation>
</comment>
<comment type="tissue specificity">
    <text evidence="3">Expressed by the venom gland.</text>
</comment>
<comment type="mass spectrometry" mass="1317.78" method="MALDI" evidence="1"/>
<dbReference type="GO" id="GO:0005576">
    <property type="term" value="C:extracellular region"/>
    <property type="evidence" value="ECO:0000314"/>
    <property type="project" value="UniProtKB"/>
</dbReference>